<organism>
    <name type="scientific">Buchnera aphidicola subsp. Acyrthosiphon pisum (strain APS)</name>
    <name type="common">Acyrthosiphon pisum symbiotic bacterium</name>
    <dbReference type="NCBI Taxonomy" id="107806"/>
    <lineage>
        <taxon>Bacteria</taxon>
        <taxon>Pseudomonadati</taxon>
        <taxon>Pseudomonadota</taxon>
        <taxon>Gammaproteobacteria</taxon>
        <taxon>Enterobacterales</taxon>
        <taxon>Erwiniaceae</taxon>
        <taxon>Buchnera</taxon>
    </lineage>
</organism>
<accession>P57312</accession>
<keyword id="KW-0131">Cell cycle</keyword>
<keyword id="KW-0132">Cell division</keyword>
<keyword id="KW-0997">Cell inner membrane</keyword>
<keyword id="KW-1003">Cell membrane</keyword>
<keyword id="KW-0133">Cell shape</keyword>
<keyword id="KW-0961">Cell wall biogenesis/degradation</keyword>
<keyword id="KW-0328">Glycosyltransferase</keyword>
<keyword id="KW-0472">Membrane</keyword>
<keyword id="KW-0573">Peptidoglycan synthesis</keyword>
<keyword id="KW-1185">Reference proteome</keyword>
<keyword id="KW-0808">Transferase</keyword>
<keyword id="KW-0812">Transmembrane</keyword>
<keyword id="KW-1133">Transmembrane helix</keyword>
<dbReference type="EC" id="2.4.99.28" evidence="1"/>
<dbReference type="EMBL" id="BA000003">
    <property type="protein sequence ID" value="BAB12933.1"/>
    <property type="molecule type" value="Genomic_DNA"/>
</dbReference>
<dbReference type="RefSeq" id="NP_240047.1">
    <property type="nucleotide sequence ID" value="NC_002528.1"/>
</dbReference>
<dbReference type="RefSeq" id="WP_009874174.1">
    <property type="nucleotide sequence ID" value="NC_002528.1"/>
</dbReference>
<dbReference type="SMR" id="P57312"/>
<dbReference type="STRING" id="563178.BUAP5A_213"/>
<dbReference type="EnsemblBacteria" id="BAB12933">
    <property type="protein sequence ID" value="BAB12933"/>
    <property type="gene ID" value="BAB12933"/>
</dbReference>
<dbReference type="KEGG" id="buc:BU217"/>
<dbReference type="PATRIC" id="fig|107806.10.peg.230"/>
<dbReference type="eggNOG" id="COG0772">
    <property type="taxonomic scope" value="Bacteria"/>
</dbReference>
<dbReference type="HOGENOM" id="CLU_029243_1_1_6"/>
<dbReference type="UniPathway" id="UPA00219"/>
<dbReference type="Proteomes" id="UP000001806">
    <property type="component" value="Chromosome"/>
</dbReference>
<dbReference type="GO" id="GO:0032153">
    <property type="term" value="C:cell division site"/>
    <property type="evidence" value="ECO:0007669"/>
    <property type="project" value="UniProtKB-UniRule"/>
</dbReference>
<dbReference type="GO" id="GO:0005886">
    <property type="term" value="C:plasma membrane"/>
    <property type="evidence" value="ECO:0007669"/>
    <property type="project" value="UniProtKB-SubCell"/>
</dbReference>
<dbReference type="GO" id="GO:0015648">
    <property type="term" value="F:lipid-linked peptidoglycan transporter activity"/>
    <property type="evidence" value="ECO:0007669"/>
    <property type="project" value="TreeGrafter"/>
</dbReference>
<dbReference type="GO" id="GO:0008955">
    <property type="term" value="F:peptidoglycan glycosyltransferase activity"/>
    <property type="evidence" value="ECO:0007669"/>
    <property type="project" value="UniProtKB-UniRule"/>
</dbReference>
<dbReference type="GO" id="GO:0071555">
    <property type="term" value="P:cell wall organization"/>
    <property type="evidence" value="ECO:0007669"/>
    <property type="project" value="UniProtKB-KW"/>
</dbReference>
<dbReference type="GO" id="GO:0043093">
    <property type="term" value="P:FtsZ-dependent cytokinesis"/>
    <property type="evidence" value="ECO:0007669"/>
    <property type="project" value="UniProtKB-UniRule"/>
</dbReference>
<dbReference type="GO" id="GO:0009252">
    <property type="term" value="P:peptidoglycan biosynthetic process"/>
    <property type="evidence" value="ECO:0007669"/>
    <property type="project" value="UniProtKB-UniRule"/>
</dbReference>
<dbReference type="GO" id="GO:0008360">
    <property type="term" value="P:regulation of cell shape"/>
    <property type="evidence" value="ECO:0007669"/>
    <property type="project" value="UniProtKB-KW"/>
</dbReference>
<dbReference type="HAMAP" id="MF_00913">
    <property type="entry name" value="PGT_FtsW_proteobact"/>
    <property type="match status" value="1"/>
</dbReference>
<dbReference type="InterPro" id="IPR018365">
    <property type="entry name" value="Cell_cycle_FtsW-rel_CS"/>
</dbReference>
<dbReference type="InterPro" id="IPR013437">
    <property type="entry name" value="FtsW"/>
</dbReference>
<dbReference type="InterPro" id="IPR001182">
    <property type="entry name" value="FtsW/RodA"/>
</dbReference>
<dbReference type="NCBIfam" id="TIGR02614">
    <property type="entry name" value="ftsW"/>
    <property type="match status" value="1"/>
</dbReference>
<dbReference type="NCBIfam" id="NF008042">
    <property type="entry name" value="PRK10774.1"/>
    <property type="match status" value="1"/>
</dbReference>
<dbReference type="PANTHER" id="PTHR30474">
    <property type="entry name" value="CELL CYCLE PROTEIN"/>
    <property type="match status" value="1"/>
</dbReference>
<dbReference type="PANTHER" id="PTHR30474:SF2">
    <property type="entry name" value="PEPTIDOGLYCAN GLYCOSYLTRANSFERASE FTSW-RELATED"/>
    <property type="match status" value="1"/>
</dbReference>
<dbReference type="Pfam" id="PF01098">
    <property type="entry name" value="FTSW_RODA_SPOVE"/>
    <property type="match status" value="1"/>
</dbReference>
<dbReference type="PROSITE" id="PS00428">
    <property type="entry name" value="FTSW_RODA_SPOVE"/>
    <property type="match status" value="1"/>
</dbReference>
<sequence>MKHLQKKNSKNPKKIEEKYNTRNSYFILYDRALVWLTLGLFSVGLIMVISTSIPISQKIYHNPLFFIKREIFYFFLIFLLSFIFLRTPIIFWEKNSNIILIISIVLLVLVLLIGHSIHGSFRWINIGFLHIQPSEICKISSFCYLASYLSRKSNEVRNNFWGFFKPMSVIITQSMLLLAEPDLGTVVVLFFTTISVLFLSGAKIGQFFIIITVSILTIILLILLEPYRIKRVLSFWNPWEDPFGNGYQLTQSLIALGRGNFLGQGLGNSIQKLDYLPDAHSDFIFSIIGEELGYIGSFLILLIIFTISFRAMYIGQKALEKKQIFSGFLACSIGIWLSFQTSINVGSVTGILPTKGLTLPFISYGGSSLIINSIAIFFLLRIDFETRLKTSQAFPRGPK</sequence>
<feature type="chain" id="PRO_0000062697" description="Probable peptidoglycan glycosyltransferase FtsW">
    <location>
        <begin position="1"/>
        <end position="399"/>
    </location>
</feature>
<feature type="transmembrane region" description="Helical" evidence="1">
    <location>
        <begin position="33"/>
        <end position="53"/>
    </location>
</feature>
<feature type="transmembrane region" description="Helical" evidence="1">
    <location>
        <begin position="71"/>
        <end position="91"/>
    </location>
</feature>
<feature type="transmembrane region" description="Helical" evidence="1">
    <location>
        <begin position="98"/>
        <end position="118"/>
    </location>
</feature>
<feature type="transmembrane region" description="Helical" evidence="1">
    <location>
        <begin position="160"/>
        <end position="180"/>
    </location>
</feature>
<feature type="transmembrane region" description="Helical" evidence="1">
    <location>
        <begin position="182"/>
        <end position="202"/>
    </location>
</feature>
<feature type="transmembrane region" description="Helical" evidence="1">
    <location>
        <begin position="204"/>
        <end position="224"/>
    </location>
</feature>
<feature type="transmembrane region" description="Helical" evidence="1">
    <location>
        <begin position="287"/>
        <end position="307"/>
    </location>
</feature>
<feature type="transmembrane region" description="Helical" evidence="1">
    <location>
        <begin position="324"/>
        <end position="344"/>
    </location>
</feature>
<feature type="transmembrane region" description="Helical" evidence="1">
    <location>
        <begin position="359"/>
        <end position="379"/>
    </location>
</feature>
<protein>
    <recommendedName>
        <fullName evidence="1">Probable peptidoglycan glycosyltransferase FtsW</fullName>
        <shortName evidence="1">PGT</shortName>
        <ecNumber evidence="1">2.4.99.28</ecNumber>
    </recommendedName>
    <alternativeName>
        <fullName evidence="1">Cell division protein FtsW</fullName>
    </alternativeName>
    <alternativeName>
        <fullName evidence="1">Cell wall polymerase</fullName>
    </alternativeName>
    <alternativeName>
        <fullName evidence="1">Peptidoglycan polymerase</fullName>
        <shortName evidence="1">PG polymerase</shortName>
    </alternativeName>
</protein>
<evidence type="ECO:0000255" key="1">
    <source>
        <dbReference type="HAMAP-Rule" id="MF_00913"/>
    </source>
</evidence>
<proteinExistence type="inferred from homology"/>
<reference key="1">
    <citation type="journal article" date="2000" name="Nature">
        <title>Genome sequence of the endocellular bacterial symbiont of aphids Buchnera sp. APS.</title>
        <authorList>
            <person name="Shigenobu S."/>
            <person name="Watanabe H."/>
            <person name="Hattori M."/>
            <person name="Sakaki Y."/>
            <person name="Ishikawa H."/>
        </authorList>
    </citation>
    <scope>NUCLEOTIDE SEQUENCE [LARGE SCALE GENOMIC DNA]</scope>
    <source>
        <strain>APS</strain>
    </source>
</reference>
<comment type="function">
    <text evidence="1">Peptidoglycan polymerase that is essential for cell division.</text>
</comment>
<comment type="catalytic activity">
    <reaction evidence="1">
        <text>[GlcNAc-(1-&gt;4)-Mur2Ac(oyl-L-Ala-gamma-D-Glu-L-Lys-D-Ala-D-Ala)](n)-di-trans,octa-cis-undecaprenyl diphosphate + beta-D-GlcNAc-(1-&gt;4)-Mur2Ac(oyl-L-Ala-gamma-D-Glu-L-Lys-D-Ala-D-Ala)-di-trans,octa-cis-undecaprenyl diphosphate = [GlcNAc-(1-&gt;4)-Mur2Ac(oyl-L-Ala-gamma-D-Glu-L-Lys-D-Ala-D-Ala)](n+1)-di-trans,octa-cis-undecaprenyl diphosphate + di-trans,octa-cis-undecaprenyl diphosphate + H(+)</text>
        <dbReference type="Rhea" id="RHEA:23708"/>
        <dbReference type="Rhea" id="RHEA-COMP:9602"/>
        <dbReference type="Rhea" id="RHEA-COMP:9603"/>
        <dbReference type="ChEBI" id="CHEBI:15378"/>
        <dbReference type="ChEBI" id="CHEBI:58405"/>
        <dbReference type="ChEBI" id="CHEBI:60033"/>
        <dbReference type="ChEBI" id="CHEBI:78435"/>
        <dbReference type="EC" id="2.4.99.28"/>
    </reaction>
</comment>
<comment type="pathway">
    <text evidence="1">Cell wall biogenesis; peptidoglycan biosynthesis.</text>
</comment>
<comment type="subcellular location">
    <subcellularLocation>
        <location evidence="1">Cell inner membrane</location>
        <topology evidence="1">Multi-pass membrane protein</topology>
    </subcellularLocation>
    <text evidence="1">Localizes to the division septum.</text>
</comment>
<comment type="similarity">
    <text evidence="1">Belongs to the SEDS family. FtsW subfamily.</text>
</comment>
<name>FTSW_BUCAI</name>
<gene>
    <name evidence="1" type="primary">ftsW</name>
    <name type="ordered locus">BU217</name>
</gene>